<accession>Q99Y88</accession>
<accession>Q48WW2</accession>
<comment type="function">
    <text evidence="1">Involved in transcription antitermination. Required for transcription of ribosomal RNA (rRNA) genes. Binds specifically to the boxA antiterminator sequence of the ribosomal RNA (rrn) operons.</text>
</comment>
<comment type="similarity">
    <text evidence="1">Belongs to the NusB family.</text>
</comment>
<sequence>MTNSFQNSRRDLRERAFQALFNIEMGAELLAASQFAYGYDKVTGEDAQVLELPIFLLSLVTGVNNHKEELDNLISTHLKKGWSLERLTLTDKTLLRLGLFEIKYFDETPDRVALNEIIEVAKKYSDETSAKFINGLLSQYVSGAPSANKS</sequence>
<gene>
    <name evidence="1" type="primary">nusB</name>
    <name type="ordered locus">SPy_1818</name>
    <name type="ordered locus">M5005_Spy1545</name>
</gene>
<reference key="1">
    <citation type="journal article" date="2001" name="Proc. Natl. Acad. Sci. U.S.A.">
        <title>Complete genome sequence of an M1 strain of Streptococcus pyogenes.</title>
        <authorList>
            <person name="Ferretti J.J."/>
            <person name="McShan W.M."/>
            <person name="Ajdic D.J."/>
            <person name="Savic D.J."/>
            <person name="Savic G."/>
            <person name="Lyon K."/>
            <person name="Primeaux C."/>
            <person name="Sezate S."/>
            <person name="Suvorov A.N."/>
            <person name="Kenton S."/>
            <person name="Lai H.S."/>
            <person name="Lin S.P."/>
            <person name="Qian Y."/>
            <person name="Jia H.G."/>
            <person name="Najar F.Z."/>
            <person name="Ren Q."/>
            <person name="Zhu H."/>
            <person name="Song L."/>
            <person name="White J."/>
            <person name="Yuan X."/>
            <person name="Clifton S.W."/>
            <person name="Roe B.A."/>
            <person name="McLaughlin R.E."/>
        </authorList>
    </citation>
    <scope>NUCLEOTIDE SEQUENCE [LARGE SCALE GENOMIC DNA]</scope>
    <source>
        <strain>ATCC 700294 / SF370 / Serotype M1</strain>
    </source>
</reference>
<reference key="2">
    <citation type="submission" date="2014-04" db="EMBL/GenBank/DDBJ databases">
        <authorList>
            <person name="Beres S.B."/>
            <person name="Musser J.M."/>
        </authorList>
    </citation>
    <scope>SEQUENCE REVISION TO 107 AND 121</scope>
</reference>
<reference key="3">
    <citation type="journal article" date="2005" name="J. Infect. Dis.">
        <title>Evolutionary origin and emergence of a highly successful clone of serotype M1 group A Streptococcus involved multiple horizontal gene transfer events.</title>
        <authorList>
            <person name="Sumby P."/>
            <person name="Porcella S.F."/>
            <person name="Madrigal A.G."/>
            <person name="Barbian K.D."/>
            <person name="Virtaneva K."/>
            <person name="Ricklefs S.M."/>
            <person name="Sturdevant D.E."/>
            <person name="Graham M.R."/>
            <person name="Vuopio-Varkila J."/>
            <person name="Hoe N.P."/>
            <person name="Musser J.M."/>
        </authorList>
    </citation>
    <scope>NUCLEOTIDE SEQUENCE [LARGE SCALE GENOMIC DNA]</scope>
    <source>
        <strain>ATCC BAA-947 / MGAS5005 / Serotype M1</strain>
    </source>
</reference>
<name>NUSB_STRP1</name>
<dbReference type="EMBL" id="AE004092">
    <property type="protein sequence ID" value="AAK34543.2"/>
    <property type="molecule type" value="Genomic_DNA"/>
</dbReference>
<dbReference type="EMBL" id="CP000017">
    <property type="protein sequence ID" value="AAZ52163.1"/>
    <property type="molecule type" value="Genomic_DNA"/>
</dbReference>
<dbReference type="RefSeq" id="NP_269822.2">
    <property type="nucleotide sequence ID" value="NC_002737.2"/>
</dbReference>
<dbReference type="SMR" id="Q99Y88"/>
<dbReference type="PaxDb" id="1314-HKU360_01595"/>
<dbReference type="KEGG" id="spy:SPy_1818"/>
<dbReference type="KEGG" id="spz:M5005_Spy1545"/>
<dbReference type="PATRIC" id="fig|160490.10.peg.1580"/>
<dbReference type="HOGENOM" id="CLU_087843_3_2_9"/>
<dbReference type="Proteomes" id="UP000000750">
    <property type="component" value="Chromosome"/>
</dbReference>
<dbReference type="GO" id="GO:0005829">
    <property type="term" value="C:cytosol"/>
    <property type="evidence" value="ECO:0007669"/>
    <property type="project" value="TreeGrafter"/>
</dbReference>
<dbReference type="GO" id="GO:0003723">
    <property type="term" value="F:RNA binding"/>
    <property type="evidence" value="ECO:0007669"/>
    <property type="project" value="UniProtKB-UniRule"/>
</dbReference>
<dbReference type="GO" id="GO:0006353">
    <property type="term" value="P:DNA-templated transcription termination"/>
    <property type="evidence" value="ECO:0007669"/>
    <property type="project" value="UniProtKB-UniRule"/>
</dbReference>
<dbReference type="GO" id="GO:0031564">
    <property type="term" value="P:transcription antitermination"/>
    <property type="evidence" value="ECO:0007669"/>
    <property type="project" value="UniProtKB-KW"/>
</dbReference>
<dbReference type="Gene3D" id="1.10.940.10">
    <property type="entry name" value="NusB-like"/>
    <property type="match status" value="1"/>
</dbReference>
<dbReference type="HAMAP" id="MF_00073">
    <property type="entry name" value="NusB"/>
    <property type="match status" value="1"/>
</dbReference>
<dbReference type="InterPro" id="IPR035926">
    <property type="entry name" value="NusB-like_sf"/>
</dbReference>
<dbReference type="InterPro" id="IPR011605">
    <property type="entry name" value="NusB_fam"/>
</dbReference>
<dbReference type="InterPro" id="IPR006027">
    <property type="entry name" value="NusB_RsmB_TIM44"/>
</dbReference>
<dbReference type="NCBIfam" id="TIGR01951">
    <property type="entry name" value="nusB"/>
    <property type="match status" value="1"/>
</dbReference>
<dbReference type="NCBIfam" id="NF001223">
    <property type="entry name" value="PRK00202.1-1"/>
    <property type="match status" value="1"/>
</dbReference>
<dbReference type="PANTHER" id="PTHR11078:SF3">
    <property type="entry name" value="ANTITERMINATION NUSB DOMAIN-CONTAINING PROTEIN"/>
    <property type="match status" value="1"/>
</dbReference>
<dbReference type="PANTHER" id="PTHR11078">
    <property type="entry name" value="N UTILIZATION SUBSTANCE PROTEIN B-RELATED"/>
    <property type="match status" value="1"/>
</dbReference>
<dbReference type="Pfam" id="PF01029">
    <property type="entry name" value="NusB"/>
    <property type="match status" value="1"/>
</dbReference>
<dbReference type="SUPFAM" id="SSF48013">
    <property type="entry name" value="NusB-like"/>
    <property type="match status" value="1"/>
</dbReference>
<evidence type="ECO:0000255" key="1">
    <source>
        <dbReference type="HAMAP-Rule" id="MF_00073"/>
    </source>
</evidence>
<keyword id="KW-1185">Reference proteome</keyword>
<keyword id="KW-0694">RNA-binding</keyword>
<keyword id="KW-0804">Transcription</keyword>
<keyword id="KW-0889">Transcription antitermination</keyword>
<keyword id="KW-0805">Transcription regulation</keyword>
<organism>
    <name type="scientific">Streptococcus pyogenes serotype M1</name>
    <dbReference type="NCBI Taxonomy" id="301447"/>
    <lineage>
        <taxon>Bacteria</taxon>
        <taxon>Bacillati</taxon>
        <taxon>Bacillota</taxon>
        <taxon>Bacilli</taxon>
        <taxon>Lactobacillales</taxon>
        <taxon>Streptococcaceae</taxon>
        <taxon>Streptococcus</taxon>
    </lineage>
</organism>
<protein>
    <recommendedName>
        <fullName evidence="1">Transcription antitermination protein NusB</fullName>
    </recommendedName>
    <alternativeName>
        <fullName evidence="1">Antitermination factor NusB</fullName>
    </alternativeName>
</protein>
<feature type="chain" id="PRO_0000176592" description="Transcription antitermination protein NusB">
    <location>
        <begin position="1"/>
        <end position="150"/>
    </location>
</feature>
<proteinExistence type="inferred from homology"/>